<protein>
    <recommendedName>
        <fullName>Putative methyltransferase 235L</fullName>
        <ecNumber>2.1.1.-</ecNumber>
    </recommendedName>
</protein>
<evidence type="ECO:0000255" key="1"/>
<evidence type="ECO:0000305" key="2"/>
<reference key="1">
    <citation type="journal article" date="2001" name="Virology">
        <title>Analysis of the first complete DNA sequence of an invertebrate iridovirus: coding strategy of the genome of Chilo iridescent virus.</title>
        <authorList>
            <person name="Jakob N.J."/>
            <person name="Mueller K."/>
            <person name="Bahr U."/>
            <person name="Darai G."/>
        </authorList>
    </citation>
    <scope>NUCLEOTIDE SEQUENCE [LARGE SCALE GENOMIC DNA]</scope>
</reference>
<reference key="2">
    <citation type="journal article" date="2007" name="Virol. J.">
        <title>Comparative genomic analysis of the family Iridoviridae: re-annotating and defining the core set of iridovirus genes.</title>
        <authorList>
            <person name="Eaton H.E."/>
            <person name="Metcalf J."/>
            <person name="Penny E."/>
            <person name="Tcherepanov V."/>
            <person name="Upton C."/>
            <person name="Brunetti C.R."/>
        </authorList>
    </citation>
    <scope>GENOME REANNOTATION</scope>
</reference>
<proteinExistence type="inferred from homology"/>
<gene>
    <name type="ORF">IIV6-235L</name>
</gene>
<feature type="signal peptide" evidence="1">
    <location>
        <begin position="1"/>
        <end position="17"/>
    </location>
</feature>
<feature type="chain" id="PRO_0000377491" description="Putative methyltransferase 235L">
    <location>
        <begin position="18"/>
        <end position="265"/>
    </location>
</feature>
<comment type="similarity">
    <text evidence="2">Belongs to the methyltransferase superfamily.</text>
</comment>
<accession>Q91FT7</accession>
<organismHost>
    <name type="scientific">Acheta domesticus</name>
    <name type="common">House cricket</name>
    <dbReference type="NCBI Taxonomy" id="6997"/>
</organismHost>
<organismHost>
    <name type="scientific">Chilo suppressalis</name>
    <name type="common">Asiatic rice borer moth</name>
    <dbReference type="NCBI Taxonomy" id="168631"/>
</organismHost>
<organismHost>
    <name type="scientific">Gryllus bimaculatus</name>
    <name type="common">Two-spotted cricket</name>
    <dbReference type="NCBI Taxonomy" id="6999"/>
</organismHost>
<organismHost>
    <name type="scientific">Gryllus campestris</name>
    <dbReference type="NCBI Taxonomy" id="58607"/>
</organismHost>
<organismHost>
    <name type="scientific">Spodoptera frugiperda</name>
    <name type="common">Fall armyworm</name>
    <dbReference type="NCBI Taxonomy" id="7108"/>
</organismHost>
<keyword id="KW-0489">Methyltransferase</keyword>
<keyword id="KW-1185">Reference proteome</keyword>
<keyword id="KW-0732">Signal</keyword>
<keyword id="KW-0808">Transferase</keyword>
<name>235L_IIV6</name>
<dbReference type="EC" id="2.1.1.-"/>
<dbReference type="EMBL" id="AF303741">
    <property type="protein sequence ID" value="AAK82096.1"/>
    <property type="molecule type" value="Genomic_DNA"/>
</dbReference>
<dbReference type="RefSeq" id="NP_149698.1">
    <property type="nucleotide sequence ID" value="NC_003038.1"/>
</dbReference>
<dbReference type="SMR" id="Q91FT7"/>
<dbReference type="KEGG" id="vg:1733383"/>
<dbReference type="OrthoDB" id="15302at10239"/>
<dbReference type="Proteomes" id="UP000001359">
    <property type="component" value="Genome"/>
</dbReference>
<dbReference type="GO" id="GO:0008168">
    <property type="term" value="F:methyltransferase activity"/>
    <property type="evidence" value="ECO:0007669"/>
    <property type="project" value="UniProtKB-KW"/>
</dbReference>
<dbReference type="GO" id="GO:0032259">
    <property type="term" value="P:methylation"/>
    <property type="evidence" value="ECO:0007669"/>
    <property type="project" value="UniProtKB-KW"/>
</dbReference>
<dbReference type="CDD" id="cd02440">
    <property type="entry name" value="AdoMet_MTases"/>
    <property type="match status" value="1"/>
</dbReference>
<dbReference type="Gene3D" id="3.40.50.150">
    <property type="entry name" value="Vaccinia Virus protein VP39"/>
    <property type="match status" value="1"/>
</dbReference>
<dbReference type="InterPro" id="IPR025714">
    <property type="entry name" value="Methyltranfer_dom"/>
</dbReference>
<dbReference type="InterPro" id="IPR029063">
    <property type="entry name" value="SAM-dependent_MTases_sf"/>
</dbReference>
<dbReference type="PANTHER" id="PTHR43861:SF1">
    <property type="entry name" value="TRANS-ACONITATE 2-METHYLTRANSFERASE"/>
    <property type="match status" value="1"/>
</dbReference>
<dbReference type="PANTHER" id="PTHR43861">
    <property type="entry name" value="TRANS-ACONITATE 2-METHYLTRANSFERASE-RELATED"/>
    <property type="match status" value="1"/>
</dbReference>
<dbReference type="Pfam" id="PF13847">
    <property type="entry name" value="Methyltransf_31"/>
    <property type="match status" value="1"/>
</dbReference>
<dbReference type="SUPFAM" id="SSF53335">
    <property type="entry name" value="S-adenosyl-L-methionine-dependent methyltransferases"/>
    <property type="match status" value="1"/>
</dbReference>
<sequence length="265" mass="30764">MDICICYFFTILTTISCWNVTSYSKNSDFQYLSSKNFLDQLQIASNKTVIDIGCGNGKITNYISSLVKDGSVIGIDKDSSMIKYAKETYPNVDFKVMDIQNENIDKKYDIVVSFFCLPWIVNKQASFHHISNMMKSGSKLYILAAIMETNHVTLINNLMKKDHWKLFFVNYSSPFDYLNDIQYDIYANQSGIEQKKFKVYNIPYTFKDRQSLHKFNLAILPQLNQLSIEHREIFITELLNDYFSFIGSVNLTINFTIVKFIGCRV</sequence>
<organism>
    <name type="scientific">Invertebrate iridescent virus 6</name>
    <name type="common">IIV-6</name>
    <name type="synonym">Chilo iridescent virus</name>
    <dbReference type="NCBI Taxonomy" id="176652"/>
    <lineage>
        <taxon>Viruses</taxon>
        <taxon>Varidnaviria</taxon>
        <taxon>Bamfordvirae</taxon>
        <taxon>Nucleocytoviricota</taxon>
        <taxon>Megaviricetes</taxon>
        <taxon>Pimascovirales</taxon>
        <taxon>Iridoviridae</taxon>
        <taxon>Betairidovirinae</taxon>
        <taxon>Iridovirus</taxon>
    </lineage>
</organism>